<proteinExistence type="evidence at protein level"/>
<evidence type="ECO:0000250" key="1">
    <source>
        <dbReference type="UniProtKB" id="O88844"/>
    </source>
</evidence>
<evidence type="ECO:0000250" key="2">
    <source>
        <dbReference type="UniProtKB" id="P41562"/>
    </source>
</evidence>
<accession>P20304</accession>
<dbReference type="EC" id="1.1.1.42" evidence="1"/>
<dbReference type="InParanoid" id="P20304"/>
<dbReference type="Proteomes" id="UP000008227">
    <property type="component" value="Unplaced"/>
</dbReference>
<dbReference type="Proteomes" id="UP000314985">
    <property type="component" value="Unplaced"/>
</dbReference>
<dbReference type="Proteomes" id="UP000694570">
    <property type="component" value="Unplaced"/>
</dbReference>
<dbReference type="Proteomes" id="UP000694571">
    <property type="component" value="Unplaced"/>
</dbReference>
<dbReference type="Proteomes" id="UP000694720">
    <property type="component" value="Unplaced"/>
</dbReference>
<dbReference type="Proteomes" id="UP000694722">
    <property type="component" value="Unplaced"/>
</dbReference>
<dbReference type="Proteomes" id="UP000694723">
    <property type="component" value="Unplaced"/>
</dbReference>
<dbReference type="Proteomes" id="UP000694724">
    <property type="component" value="Unplaced"/>
</dbReference>
<dbReference type="Proteomes" id="UP000694725">
    <property type="component" value="Unplaced"/>
</dbReference>
<dbReference type="Proteomes" id="UP000694726">
    <property type="component" value="Unplaced"/>
</dbReference>
<dbReference type="Proteomes" id="UP000694727">
    <property type="component" value="Unplaced"/>
</dbReference>
<dbReference type="Proteomes" id="UP000694728">
    <property type="component" value="Unplaced"/>
</dbReference>
<dbReference type="GO" id="GO:0005829">
    <property type="term" value="C:cytosol"/>
    <property type="evidence" value="ECO:0007669"/>
    <property type="project" value="UniProtKB-SubCell"/>
</dbReference>
<dbReference type="GO" id="GO:0004450">
    <property type="term" value="F:isocitrate dehydrogenase (NADP+) activity"/>
    <property type="evidence" value="ECO:0000250"/>
    <property type="project" value="UniProtKB"/>
</dbReference>
<dbReference type="GO" id="GO:0000287">
    <property type="term" value="F:magnesium ion binding"/>
    <property type="evidence" value="ECO:0000250"/>
    <property type="project" value="UniProtKB"/>
</dbReference>
<dbReference type="GO" id="GO:0006103">
    <property type="term" value="P:2-oxoglutarate metabolic process"/>
    <property type="evidence" value="ECO:0000250"/>
    <property type="project" value="UniProtKB"/>
</dbReference>
<dbReference type="GO" id="GO:0006102">
    <property type="term" value="P:isocitrate metabolic process"/>
    <property type="evidence" value="ECO:0000250"/>
    <property type="project" value="UniProtKB"/>
</dbReference>
<dbReference type="GO" id="GO:0006099">
    <property type="term" value="P:tricarboxylic acid cycle"/>
    <property type="evidence" value="ECO:0007669"/>
    <property type="project" value="UniProtKB-KW"/>
</dbReference>
<feature type="chain" id="PRO_0000083579" description="Isocitrate dehydrogenase [NADP] cytoplasmic">
    <location>
        <begin position="1" status="less than"/>
        <end position="13" status="greater than"/>
    </location>
</feature>
<feature type="non-terminal residue">
    <location>
        <position position="1"/>
    </location>
</feature>
<feature type="non-terminal residue">
    <location>
        <position position="13"/>
    </location>
</feature>
<protein>
    <recommendedName>
        <fullName>Isocitrate dehydrogenase [NADP] cytoplasmic</fullName>
        <shortName>IDH</shortName>
        <ecNumber evidence="1">1.1.1.42</ecNumber>
    </recommendedName>
    <alternativeName>
        <fullName>Cytosolic NADP-isocitrate dehydrogenase</fullName>
    </alternativeName>
    <alternativeName>
        <fullName>IDP</fullName>
    </alternativeName>
    <alternativeName>
        <fullName>NADP(+)-specific ICDH</fullName>
    </alternativeName>
    <alternativeName>
        <fullName>Oxalosuccinate decarboxylase</fullName>
    </alternativeName>
</protein>
<gene>
    <name type="primary">IDH1</name>
</gene>
<name>IDHC_PIG</name>
<keyword id="KW-0963">Cytoplasm</keyword>
<keyword id="KW-0903">Direct protein sequencing</keyword>
<keyword id="KW-0521">NADP</keyword>
<keyword id="KW-0560">Oxidoreductase</keyword>
<keyword id="KW-1185">Reference proteome</keyword>
<keyword id="KW-0816">Tricarboxylic acid cycle</keyword>
<comment type="catalytic activity">
    <reaction evidence="1">
        <text>D-threo-isocitrate + NADP(+) = 2-oxoglutarate + CO2 + NADPH</text>
        <dbReference type="Rhea" id="RHEA:19629"/>
        <dbReference type="ChEBI" id="CHEBI:15562"/>
        <dbReference type="ChEBI" id="CHEBI:16526"/>
        <dbReference type="ChEBI" id="CHEBI:16810"/>
        <dbReference type="ChEBI" id="CHEBI:57783"/>
        <dbReference type="ChEBI" id="CHEBI:58349"/>
        <dbReference type="EC" id="1.1.1.42"/>
    </reaction>
</comment>
<comment type="cofactor">
    <cofactor evidence="1">
        <name>Mg(2+)</name>
        <dbReference type="ChEBI" id="CHEBI:18420"/>
    </cofactor>
    <cofactor evidence="1">
        <name>Mn(2+)</name>
        <dbReference type="ChEBI" id="CHEBI:29035"/>
    </cofactor>
    <text evidence="1">Binds 1 Mg(2+) or Mn(2+) ion per subunit.</text>
</comment>
<comment type="subunit">
    <text evidence="1">Homodimer.</text>
</comment>
<comment type="subcellular location">
    <subcellularLocation>
        <location evidence="2">Cytoplasm</location>
        <location evidence="2">Cytosol</location>
    </subcellularLocation>
</comment>
<organism>
    <name type="scientific">Sus scrofa</name>
    <name type="common">Pig</name>
    <dbReference type="NCBI Taxonomy" id="9823"/>
    <lineage>
        <taxon>Eukaryota</taxon>
        <taxon>Metazoa</taxon>
        <taxon>Chordata</taxon>
        <taxon>Craniata</taxon>
        <taxon>Vertebrata</taxon>
        <taxon>Euteleostomi</taxon>
        <taxon>Mammalia</taxon>
        <taxon>Eutheria</taxon>
        <taxon>Laurasiatheria</taxon>
        <taxon>Artiodactyla</taxon>
        <taxon>Suina</taxon>
        <taxon>Suidae</taxon>
        <taxon>Sus</taxon>
    </lineage>
</organism>
<sequence>DLAGEIHGLSNVK</sequence>
<reference key="1">
    <citation type="journal article" date="1987" name="J. Biol. Chem.">
        <title>Isolation of the glutamyl peptide labeled by the nucleotide analogue 2-(4-bromo-2,3-dioxobutylthio)-1,N(6)-ethenoadenosine 2',5'-biphosphate in the active site of NADP+-specific isocitrate dehydrogenase.</title>
        <authorList>
            <person name="Bailey J.M."/>
            <person name="Colman R.F."/>
        </authorList>
    </citation>
    <scope>PROTEIN SEQUENCE</scope>
</reference>
<reference key="2">
    <citation type="journal article" date="1987" name="J. Biol. Chem.">
        <title>Characterization of an active site peptide modified by the substrate analogue 3-bromo-2-ketoglutarate on a single chain of dimeric NADP+-dependent isocitrate dehydrogenase.</title>
        <authorList>
            <person name="Ehrlich R.S."/>
            <person name="Colman R.F."/>
        </authorList>
    </citation>
    <scope>PROTEIN SEQUENCE</scope>
</reference>